<keyword id="KW-0240">DNA-directed RNA polymerase</keyword>
<keyword id="KW-0548">Nucleotidyltransferase</keyword>
<keyword id="KW-1185">Reference proteome</keyword>
<keyword id="KW-0804">Transcription</keyword>
<keyword id="KW-0808">Transferase</keyword>
<gene>
    <name evidence="1" type="primary">rpoB</name>
    <name type="ordered locus">plu0439</name>
</gene>
<organism>
    <name type="scientific">Photorhabdus laumondii subsp. laumondii (strain DSM 15139 / CIP 105565 / TT01)</name>
    <name type="common">Photorhabdus luminescens subsp. laumondii</name>
    <dbReference type="NCBI Taxonomy" id="243265"/>
    <lineage>
        <taxon>Bacteria</taxon>
        <taxon>Pseudomonadati</taxon>
        <taxon>Pseudomonadota</taxon>
        <taxon>Gammaproteobacteria</taxon>
        <taxon>Enterobacterales</taxon>
        <taxon>Morganellaceae</taxon>
        <taxon>Photorhabdus</taxon>
    </lineage>
</organism>
<reference key="1">
    <citation type="journal article" date="2003" name="Nat. Biotechnol.">
        <title>The genome sequence of the entomopathogenic bacterium Photorhabdus luminescens.</title>
        <authorList>
            <person name="Duchaud E."/>
            <person name="Rusniok C."/>
            <person name="Frangeul L."/>
            <person name="Buchrieser C."/>
            <person name="Givaudan A."/>
            <person name="Taourit S."/>
            <person name="Bocs S."/>
            <person name="Boursaux-Eude C."/>
            <person name="Chandler M."/>
            <person name="Charles J.-F."/>
            <person name="Dassa E."/>
            <person name="Derose R."/>
            <person name="Derzelle S."/>
            <person name="Freyssinet G."/>
            <person name="Gaudriault S."/>
            <person name="Medigue C."/>
            <person name="Lanois A."/>
            <person name="Powell K."/>
            <person name="Siguier P."/>
            <person name="Vincent R."/>
            <person name="Wingate V."/>
            <person name="Zouine M."/>
            <person name="Glaser P."/>
            <person name="Boemare N."/>
            <person name="Danchin A."/>
            <person name="Kunst F."/>
        </authorList>
    </citation>
    <scope>NUCLEOTIDE SEQUENCE [LARGE SCALE GENOMIC DNA]</scope>
    <source>
        <strain>DSM 15139 / CIP 105565 / TT01</strain>
    </source>
</reference>
<name>RPOB_PHOLL</name>
<protein>
    <recommendedName>
        <fullName evidence="1">DNA-directed RNA polymerase subunit beta</fullName>
        <shortName evidence="1">RNAP subunit beta</shortName>
        <ecNumber evidence="1">2.7.7.6</ecNumber>
    </recommendedName>
    <alternativeName>
        <fullName evidence="1">RNA polymerase subunit beta</fullName>
    </alternativeName>
    <alternativeName>
        <fullName evidence="1">Transcriptase subunit beta</fullName>
    </alternativeName>
</protein>
<feature type="chain" id="PRO_0000047934" description="DNA-directed RNA polymerase subunit beta">
    <location>
        <begin position="1"/>
        <end position="1342"/>
    </location>
</feature>
<accession>Q7N9A4</accession>
<evidence type="ECO:0000255" key="1">
    <source>
        <dbReference type="HAMAP-Rule" id="MF_01321"/>
    </source>
</evidence>
<sequence>MVYSYTEKKRIRKDFGKRPQVLDVPYLLSIQLDSFQKFIEQDPEGQNGLEAAFRSVFPIQSYSGSSELQYVSYRLGEPVFDVKECQIRGVTYSAPLRVKLRLVIYEREAPEGTVKDIKEQEVYMGEIPLMTDNGTFVINGTERVIVSQLHRSPGVFFDSDKGKTHSSGKVLYNARIIPYRGSWLDFEFDPKDNLFVRIDRRRKLPATIILRAMNYSTEEILNLFFSKTIFEIRDNRLQMTLVPERLRGETASFDIEANGKVYVEKGRRITARHIRQLEKDEVNRIEVPVEYIAGKVVARDYIDVNTGEIICAANMELSLDLLARLSQSGHKSIETLFTNDLDHGAYISETLRVDPTNDRLSALVEIYRMMRPGEPPTREAAENLFENLFFSEDRYDLSAVGRMKFNRSLSREEVEGSGILSKDDIIDVMKKLIDIRNGKGEVDDIDHLGNRRIRSVGEMAENQFRVGLVRVERAVKERLSLGDLDTLMPQDMINAKPISAAVKEFFGSSQLSQFMDQNNPLSEITHKRRISALGPGGLTRERAGFEVRDVHPTHYGRVCPIETPEGPNIGLINSLSVYAQTNEYGFLETPYRLVRDGVVTDEIHYLSAIEEGNFVIAQANTVLDDEGHFVEDLITCRNYGESSLFNREQVEYMDVSTQQVVSVGASLIPFLEHDDANRALMGANMQRQAVPTLRADKPLVGTGMERAVAVDSGVTSVAKRGGVVQYVDASRIVIKVNEDEMYPGEAGIDIYNLTKYTRSNQNTCINQMPCVSLGEPVERGDVLADGPSTDLGELALGQNMRVAFMPWNGYNFEDSILVSERVVQEDRFTTIHIQELACVSRDTKLGPEEITADIPNVGEAALSKLDESGIVYIGAEVTGGDILVGKVTPKGETQLTPEEKLLRAIFGEKASDVKDSSLRVPNGVSGTVIDVQVFTRDGVEKDKRALEIEEMQLRQAKKDLTEELQIFEAGLFARIRSVLIAGGIEAEKLDKLPRERWLELGLADEEKQNQLEQLAEQYDELKAEFEKKLDAKRRKITQGDDLAPGVLKIVKVYLAVKRQIQPGDKMAGRHGNKGVISKINPIEDMPYDENGTPVDIVLNPLGVPSRMNIGQILETHLGMAAKGIGDKINAMLKQQQEVAKLREFIQKAYNLGDETRQKVDLSTFSDEEVMRLAENLKKGMPIATPVFDGAKEKEIKELLKLGDLPTSGQITLFDGRTGEQFERQVTVGYMYMLKLNHLVDDKMHARSTGSYSLVTQQPLGGKAQFGGQRFGEMEVWALEAYGAAYTLQEMLTVKSDDVNGRTKMYKNIVDGNHQMEPGMPESFNVLLKEIRSLGINIELEGE</sequence>
<proteinExistence type="inferred from homology"/>
<dbReference type="EC" id="2.7.7.6" evidence="1"/>
<dbReference type="EMBL" id="BX571860">
    <property type="protein sequence ID" value="CAE12734.1"/>
    <property type="molecule type" value="Genomic_DNA"/>
</dbReference>
<dbReference type="RefSeq" id="WP_011144825.1">
    <property type="nucleotide sequence ID" value="NC_005126.1"/>
</dbReference>
<dbReference type="SMR" id="Q7N9A4"/>
<dbReference type="STRING" id="243265.plu0439"/>
<dbReference type="GeneID" id="48846725"/>
<dbReference type="KEGG" id="plu:plu0439"/>
<dbReference type="eggNOG" id="COG0085">
    <property type="taxonomic scope" value="Bacteria"/>
</dbReference>
<dbReference type="HOGENOM" id="CLU_000524_4_0_6"/>
<dbReference type="OrthoDB" id="9803954at2"/>
<dbReference type="Proteomes" id="UP000002514">
    <property type="component" value="Chromosome"/>
</dbReference>
<dbReference type="GO" id="GO:0000428">
    <property type="term" value="C:DNA-directed RNA polymerase complex"/>
    <property type="evidence" value="ECO:0007669"/>
    <property type="project" value="UniProtKB-KW"/>
</dbReference>
<dbReference type="GO" id="GO:0003677">
    <property type="term" value="F:DNA binding"/>
    <property type="evidence" value="ECO:0007669"/>
    <property type="project" value="UniProtKB-UniRule"/>
</dbReference>
<dbReference type="GO" id="GO:0003899">
    <property type="term" value="F:DNA-directed RNA polymerase activity"/>
    <property type="evidence" value="ECO:0007669"/>
    <property type="project" value="UniProtKB-UniRule"/>
</dbReference>
<dbReference type="GO" id="GO:0032549">
    <property type="term" value="F:ribonucleoside binding"/>
    <property type="evidence" value="ECO:0007669"/>
    <property type="project" value="InterPro"/>
</dbReference>
<dbReference type="GO" id="GO:0006351">
    <property type="term" value="P:DNA-templated transcription"/>
    <property type="evidence" value="ECO:0007669"/>
    <property type="project" value="UniProtKB-UniRule"/>
</dbReference>
<dbReference type="CDD" id="cd00653">
    <property type="entry name" value="RNA_pol_B_RPB2"/>
    <property type="match status" value="1"/>
</dbReference>
<dbReference type="FunFam" id="2.30.150.10:FF:000001">
    <property type="entry name" value="DNA-directed RNA polymerase subunit beta"/>
    <property type="match status" value="1"/>
</dbReference>
<dbReference type="FunFam" id="2.40.270.10:FF:000003">
    <property type="entry name" value="DNA-directed RNA polymerase subunit beta"/>
    <property type="match status" value="1"/>
</dbReference>
<dbReference type="FunFam" id="2.40.270.10:FF:000004">
    <property type="entry name" value="DNA-directed RNA polymerase subunit beta"/>
    <property type="match status" value="1"/>
</dbReference>
<dbReference type="FunFam" id="2.40.50.100:FF:000006">
    <property type="entry name" value="DNA-directed RNA polymerase subunit beta"/>
    <property type="match status" value="1"/>
</dbReference>
<dbReference type="FunFam" id="2.40.50.150:FF:000001">
    <property type="entry name" value="DNA-directed RNA polymerase subunit beta"/>
    <property type="match status" value="1"/>
</dbReference>
<dbReference type="FunFam" id="3.90.1100.10:FF:000002">
    <property type="entry name" value="DNA-directed RNA polymerase subunit beta"/>
    <property type="match status" value="1"/>
</dbReference>
<dbReference type="FunFam" id="3.90.1110.10:FF:000001">
    <property type="entry name" value="DNA-directed RNA polymerase subunit beta"/>
    <property type="match status" value="1"/>
</dbReference>
<dbReference type="FunFam" id="3.90.1110.10:FF:000004">
    <property type="entry name" value="DNA-directed RNA polymerase subunit beta"/>
    <property type="match status" value="1"/>
</dbReference>
<dbReference type="FunFam" id="3.90.1800.10:FF:000001">
    <property type="entry name" value="DNA-directed RNA polymerase subunit beta"/>
    <property type="match status" value="1"/>
</dbReference>
<dbReference type="Gene3D" id="2.40.50.100">
    <property type="match status" value="1"/>
</dbReference>
<dbReference type="Gene3D" id="2.40.50.150">
    <property type="match status" value="1"/>
</dbReference>
<dbReference type="Gene3D" id="3.90.1100.10">
    <property type="match status" value="2"/>
</dbReference>
<dbReference type="Gene3D" id="2.30.150.10">
    <property type="entry name" value="DNA-directed RNA polymerase, beta subunit, external 1 domain"/>
    <property type="match status" value="1"/>
</dbReference>
<dbReference type="Gene3D" id="2.40.270.10">
    <property type="entry name" value="DNA-directed RNA polymerase, subunit 2, domain 6"/>
    <property type="match status" value="1"/>
</dbReference>
<dbReference type="Gene3D" id="3.90.1800.10">
    <property type="entry name" value="RNA polymerase alpha subunit dimerisation domain"/>
    <property type="match status" value="1"/>
</dbReference>
<dbReference type="Gene3D" id="3.90.1110.10">
    <property type="entry name" value="RNA polymerase Rpb2, domain 2"/>
    <property type="match status" value="1"/>
</dbReference>
<dbReference type="HAMAP" id="MF_01321">
    <property type="entry name" value="RNApol_bact_RpoB"/>
    <property type="match status" value="1"/>
</dbReference>
<dbReference type="InterPro" id="IPR042107">
    <property type="entry name" value="DNA-dir_RNA_pol_bsu_ext_1_sf"/>
</dbReference>
<dbReference type="InterPro" id="IPR019462">
    <property type="entry name" value="DNA-dir_RNA_pol_bsu_external_1"/>
</dbReference>
<dbReference type="InterPro" id="IPR015712">
    <property type="entry name" value="DNA-dir_RNA_pol_su2"/>
</dbReference>
<dbReference type="InterPro" id="IPR007120">
    <property type="entry name" value="DNA-dir_RNAP_su2_dom"/>
</dbReference>
<dbReference type="InterPro" id="IPR037033">
    <property type="entry name" value="DNA-dir_RNAP_su2_hyb_sf"/>
</dbReference>
<dbReference type="InterPro" id="IPR010243">
    <property type="entry name" value="RNA_pol_bsu_bac"/>
</dbReference>
<dbReference type="InterPro" id="IPR007121">
    <property type="entry name" value="RNA_pol_bsu_CS"/>
</dbReference>
<dbReference type="InterPro" id="IPR007644">
    <property type="entry name" value="RNA_pol_bsu_protrusion"/>
</dbReference>
<dbReference type="InterPro" id="IPR007642">
    <property type="entry name" value="RNA_pol_Rpb2_2"/>
</dbReference>
<dbReference type="InterPro" id="IPR037034">
    <property type="entry name" value="RNA_pol_Rpb2_2_sf"/>
</dbReference>
<dbReference type="InterPro" id="IPR007645">
    <property type="entry name" value="RNA_pol_Rpb2_3"/>
</dbReference>
<dbReference type="InterPro" id="IPR007641">
    <property type="entry name" value="RNA_pol_Rpb2_7"/>
</dbReference>
<dbReference type="InterPro" id="IPR014724">
    <property type="entry name" value="RNA_pol_RPB2_OB-fold"/>
</dbReference>
<dbReference type="NCBIfam" id="NF001616">
    <property type="entry name" value="PRK00405.1"/>
    <property type="match status" value="1"/>
</dbReference>
<dbReference type="NCBIfam" id="TIGR02013">
    <property type="entry name" value="rpoB"/>
    <property type="match status" value="1"/>
</dbReference>
<dbReference type="PANTHER" id="PTHR20856">
    <property type="entry name" value="DNA-DIRECTED RNA POLYMERASE I SUBUNIT 2"/>
    <property type="match status" value="1"/>
</dbReference>
<dbReference type="Pfam" id="PF04563">
    <property type="entry name" value="RNA_pol_Rpb2_1"/>
    <property type="match status" value="1"/>
</dbReference>
<dbReference type="Pfam" id="PF04561">
    <property type="entry name" value="RNA_pol_Rpb2_2"/>
    <property type="match status" value="2"/>
</dbReference>
<dbReference type="Pfam" id="PF04565">
    <property type="entry name" value="RNA_pol_Rpb2_3"/>
    <property type="match status" value="1"/>
</dbReference>
<dbReference type="Pfam" id="PF10385">
    <property type="entry name" value="RNA_pol_Rpb2_45"/>
    <property type="match status" value="1"/>
</dbReference>
<dbReference type="Pfam" id="PF00562">
    <property type="entry name" value="RNA_pol_Rpb2_6"/>
    <property type="match status" value="1"/>
</dbReference>
<dbReference type="Pfam" id="PF04560">
    <property type="entry name" value="RNA_pol_Rpb2_7"/>
    <property type="match status" value="1"/>
</dbReference>
<dbReference type="SUPFAM" id="SSF64484">
    <property type="entry name" value="beta and beta-prime subunits of DNA dependent RNA-polymerase"/>
    <property type="match status" value="1"/>
</dbReference>
<dbReference type="PROSITE" id="PS01166">
    <property type="entry name" value="RNA_POL_BETA"/>
    <property type="match status" value="1"/>
</dbReference>
<comment type="function">
    <text evidence="1">DNA-dependent RNA polymerase catalyzes the transcription of DNA into RNA using the four ribonucleoside triphosphates as substrates.</text>
</comment>
<comment type="catalytic activity">
    <reaction evidence="1">
        <text>RNA(n) + a ribonucleoside 5'-triphosphate = RNA(n+1) + diphosphate</text>
        <dbReference type="Rhea" id="RHEA:21248"/>
        <dbReference type="Rhea" id="RHEA-COMP:14527"/>
        <dbReference type="Rhea" id="RHEA-COMP:17342"/>
        <dbReference type="ChEBI" id="CHEBI:33019"/>
        <dbReference type="ChEBI" id="CHEBI:61557"/>
        <dbReference type="ChEBI" id="CHEBI:140395"/>
        <dbReference type="EC" id="2.7.7.6"/>
    </reaction>
</comment>
<comment type="subunit">
    <text evidence="1">The RNAP catalytic core consists of 2 alpha, 1 beta, 1 beta' and 1 omega subunit. When a sigma factor is associated with the core the holoenzyme is formed, which can initiate transcription.</text>
</comment>
<comment type="similarity">
    <text evidence="1">Belongs to the RNA polymerase beta chain family.</text>
</comment>